<protein>
    <recommendedName>
        <fullName evidence="1">Phosphopentomutase</fullName>
        <ecNumber evidence="1">5.4.2.7</ecNumber>
    </recommendedName>
    <alternativeName>
        <fullName evidence="1">Phosphodeoxyribomutase</fullName>
    </alternativeName>
</protein>
<keyword id="KW-0963">Cytoplasm</keyword>
<keyword id="KW-0413">Isomerase</keyword>
<keyword id="KW-0464">Manganese</keyword>
<keyword id="KW-0479">Metal-binding</keyword>
<proteinExistence type="inferred from homology"/>
<comment type="function">
    <text evidence="1">Isomerase that catalyzes the conversion of deoxy-ribose 1-phosphate (dRib-1-P) and ribose 1-phosphate (Rib-1-P) to deoxy-ribose 5-phosphate (dRib-5-P) and ribose 5-phosphate (Rib-5-P), respectively.</text>
</comment>
<comment type="catalytic activity">
    <reaction evidence="1">
        <text>2-deoxy-alpha-D-ribose 1-phosphate = 2-deoxy-D-ribose 5-phosphate</text>
        <dbReference type="Rhea" id="RHEA:27658"/>
        <dbReference type="ChEBI" id="CHEBI:57259"/>
        <dbReference type="ChEBI" id="CHEBI:62877"/>
        <dbReference type="EC" id="5.4.2.7"/>
    </reaction>
</comment>
<comment type="catalytic activity">
    <reaction evidence="1">
        <text>alpha-D-ribose 1-phosphate = D-ribose 5-phosphate</text>
        <dbReference type="Rhea" id="RHEA:18793"/>
        <dbReference type="ChEBI" id="CHEBI:57720"/>
        <dbReference type="ChEBI" id="CHEBI:78346"/>
        <dbReference type="EC" id="5.4.2.7"/>
    </reaction>
</comment>
<comment type="cofactor">
    <cofactor evidence="1">
        <name>Mn(2+)</name>
        <dbReference type="ChEBI" id="CHEBI:29035"/>
    </cofactor>
    <text evidence="1">Binds 2 manganese ions.</text>
</comment>
<comment type="pathway">
    <text evidence="1">Carbohydrate degradation; 2-deoxy-D-ribose 1-phosphate degradation; D-glyceraldehyde 3-phosphate and acetaldehyde from 2-deoxy-alpha-D-ribose 1-phosphate: step 1/2.</text>
</comment>
<comment type="subcellular location">
    <subcellularLocation>
        <location evidence="1">Cytoplasm</location>
    </subcellularLocation>
</comment>
<comment type="similarity">
    <text evidence="1">Belongs to the phosphopentomutase family.</text>
</comment>
<name>DEOB_BACAA</name>
<feature type="chain" id="PRO_1000189771" description="Phosphopentomutase">
    <location>
        <begin position="1"/>
        <end position="394"/>
    </location>
</feature>
<feature type="binding site" evidence="1">
    <location>
        <position position="13"/>
    </location>
    <ligand>
        <name>Mn(2+)</name>
        <dbReference type="ChEBI" id="CHEBI:29035"/>
        <label>1</label>
    </ligand>
</feature>
<feature type="binding site" evidence="1">
    <location>
        <position position="286"/>
    </location>
    <ligand>
        <name>Mn(2+)</name>
        <dbReference type="ChEBI" id="CHEBI:29035"/>
        <label>2</label>
    </ligand>
</feature>
<feature type="binding site" evidence="1">
    <location>
        <position position="291"/>
    </location>
    <ligand>
        <name>Mn(2+)</name>
        <dbReference type="ChEBI" id="CHEBI:29035"/>
        <label>2</label>
    </ligand>
</feature>
<feature type="binding site" evidence="1">
    <location>
        <position position="327"/>
    </location>
    <ligand>
        <name>Mn(2+)</name>
        <dbReference type="ChEBI" id="CHEBI:29035"/>
        <label>1</label>
    </ligand>
</feature>
<feature type="binding site" evidence="1">
    <location>
        <position position="328"/>
    </location>
    <ligand>
        <name>Mn(2+)</name>
        <dbReference type="ChEBI" id="CHEBI:29035"/>
        <label>1</label>
    </ligand>
</feature>
<feature type="binding site" evidence="1">
    <location>
        <position position="339"/>
    </location>
    <ligand>
        <name>Mn(2+)</name>
        <dbReference type="ChEBI" id="CHEBI:29035"/>
        <label>2</label>
    </ligand>
</feature>
<gene>
    <name evidence="1" type="primary">deoB</name>
    <name type="ordered locus">BAA_4330</name>
</gene>
<dbReference type="EC" id="5.4.2.7" evidence="1"/>
<dbReference type="EMBL" id="CP001598">
    <property type="protein sequence ID" value="ACQ46688.1"/>
    <property type="molecule type" value="Genomic_DNA"/>
</dbReference>
<dbReference type="RefSeq" id="WP_001046068.1">
    <property type="nucleotide sequence ID" value="NC_012659.1"/>
</dbReference>
<dbReference type="SMR" id="C3P7M3"/>
<dbReference type="GeneID" id="45023977"/>
<dbReference type="KEGG" id="bai:BAA_4330"/>
<dbReference type="HOGENOM" id="CLU_053861_0_0_9"/>
<dbReference type="UniPathway" id="UPA00002">
    <property type="reaction ID" value="UER00467"/>
</dbReference>
<dbReference type="GO" id="GO:0005829">
    <property type="term" value="C:cytosol"/>
    <property type="evidence" value="ECO:0007669"/>
    <property type="project" value="TreeGrafter"/>
</dbReference>
<dbReference type="GO" id="GO:0000287">
    <property type="term" value="F:magnesium ion binding"/>
    <property type="evidence" value="ECO:0007669"/>
    <property type="project" value="InterPro"/>
</dbReference>
<dbReference type="GO" id="GO:0030145">
    <property type="term" value="F:manganese ion binding"/>
    <property type="evidence" value="ECO:0007669"/>
    <property type="project" value="UniProtKB-UniRule"/>
</dbReference>
<dbReference type="GO" id="GO:0008973">
    <property type="term" value="F:phosphopentomutase activity"/>
    <property type="evidence" value="ECO:0007669"/>
    <property type="project" value="UniProtKB-UniRule"/>
</dbReference>
<dbReference type="GO" id="GO:0006018">
    <property type="term" value="P:2-deoxyribose 1-phosphate catabolic process"/>
    <property type="evidence" value="ECO:0007669"/>
    <property type="project" value="UniProtKB-UniRule"/>
</dbReference>
<dbReference type="GO" id="GO:0006015">
    <property type="term" value="P:5-phosphoribose 1-diphosphate biosynthetic process"/>
    <property type="evidence" value="ECO:0007669"/>
    <property type="project" value="UniProtKB-UniPathway"/>
</dbReference>
<dbReference type="GO" id="GO:0043094">
    <property type="term" value="P:metabolic compound salvage"/>
    <property type="evidence" value="ECO:0007669"/>
    <property type="project" value="InterPro"/>
</dbReference>
<dbReference type="GO" id="GO:0009117">
    <property type="term" value="P:nucleotide metabolic process"/>
    <property type="evidence" value="ECO:0007669"/>
    <property type="project" value="InterPro"/>
</dbReference>
<dbReference type="CDD" id="cd16009">
    <property type="entry name" value="PPM"/>
    <property type="match status" value="1"/>
</dbReference>
<dbReference type="FunFam" id="3.30.70.1250:FF:000001">
    <property type="entry name" value="Phosphopentomutase"/>
    <property type="match status" value="1"/>
</dbReference>
<dbReference type="Gene3D" id="3.40.720.10">
    <property type="entry name" value="Alkaline Phosphatase, subunit A"/>
    <property type="match status" value="1"/>
</dbReference>
<dbReference type="Gene3D" id="3.30.70.1250">
    <property type="entry name" value="Phosphopentomutase"/>
    <property type="match status" value="1"/>
</dbReference>
<dbReference type="HAMAP" id="MF_00740">
    <property type="entry name" value="Phosphopentomut"/>
    <property type="match status" value="1"/>
</dbReference>
<dbReference type="InterPro" id="IPR017850">
    <property type="entry name" value="Alkaline_phosphatase_core_sf"/>
</dbReference>
<dbReference type="InterPro" id="IPR010045">
    <property type="entry name" value="DeoB"/>
</dbReference>
<dbReference type="InterPro" id="IPR006124">
    <property type="entry name" value="Metalloenzyme"/>
</dbReference>
<dbReference type="InterPro" id="IPR024052">
    <property type="entry name" value="Phosphopentomutase_DeoB_cap_sf"/>
</dbReference>
<dbReference type="NCBIfam" id="TIGR01696">
    <property type="entry name" value="deoB"/>
    <property type="match status" value="1"/>
</dbReference>
<dbReference type="NCBIfam" id="NF003766">
    <property type="entry name" value="PRK05362.1"/>
    <property type="match status" value="1"/>
</dbReference>
<dbReference type="PANTHER" id="PTHR21110">
    <property type="entry name" value="PHOSPHOPENTOMUTASE"/>
    <property type="match status" value="1"/>
</dbReference>
<dbReference type="PANTHER" id="PTHR21110:SF0">
    <property type="entry name" value="PHOSPHOPENTOMUTASE"/>
    <property type="match status" value="1"/>
</dbReference>
<dbReference type="Pfam" id="PF01676">
    <property type="entry name" value="Metalloenzyme"/>
    <property type="match status" value="1"/>
</dbReference>
<dbReference type="PIRSF" id="PIRSF001491">
    <property type="entry name" value="Ppentomutase"/>
    <property type="match status" value="1"/>
</dbReference>
<dbReference type="SUPFAM" id="SSF53649">
    <property type="entry name" value="Alkaline phosphatase-like"/>
    <property type="match status" value="1"/>
</dbReference>
<dbReference type="SUPFAM" id="SSF143856">
    <property type="entry name" value="DeoB insert domain-like"/>
    <property type="match status" value="1"/>
</dbReference>
<sequence length="394" mass="44099">MNKYKRIFLVVMDSVGIGEAPDAEQFGDLGSDTIGHIAEHMNGLHMPNMVKLGLGNIREMKGISKVEKPLGYYTKMQEKSTGKDTMTGHWEIMGLYIDTPFQVFPEGFPKELLDELEEKTGRKIIGNKPASGTEILDELGQEQMETGSLIVYTSADSVLQIAAHEEVVPLDELYKICKIARELTLDEKYMVGRVIARPFVGEPGNFTRTPNRHDYALKPFGRTVMNELKDSDYDVIAIGKISDIYDGEGVTESLRTKSNMDGMDKVVDTLNMDFTGLSFLNLVDFDALFGHRRDPQGYGEALQEYDARLPEVFEKLKEDDLLLITADHGNDPVHHGTDHTREYVPLLAYSPSMKEGGQELPLRQTFADIGATVAENFGVKMPEYGTSFLNELKK</sequence>
<evidence type="ECO:0000255" key="1">
    <source>
        <dbReference type="HAMAP-Rule" id="MF_00740"/>
    </source>
</evidence>
<organism>
    <name type="scientific">Bacillus anthracis (strain A0248)</name>
    <dbReference type="NCBI Taxonomy" id="592021"/>
    <lineage>
        <taxon>Bacteria</taxon>
        <taxon>Bacillati</taxon>
        <taxon>Bacillota</taxon>
        <taxon>Bacilli</taxon>
        <taxon>Bacillales</taxon>
        <taxon>Bacillaceae</taxon>
        <taxon>Bacillus</taxon>
        <taxon>Bacillus cereus group</taxon>
    </lineage>
</organism>
<reference key="1">
    <citation type="submission" date="2009-04" db="EMBL/GenBank/DDBJ databases">
        <title>Genome sequence of Bacillus anthracis A0248.</title>
        <authorList>
            <person name="Dodson R.J."/>
            <person name="Munk A.C."/>
            <person name="Bruce D."/>
            <person name="Detter C."/>
            <person name="Tapia R."/>
            <person name="Sutton G."/>
            <person name="Sims D."/>
            <person name="Brettin T."/>
        </authorList>
    </citation>
    <scope>NUCLEOTIDE SEQUENCE [LARGE SCALE GENOMIC DNA]</scope>
    <source>
        <strain>A0248</strain>
    </source>
</reference>
<accession>C3P7M3</accession>